<comment type="function">
    <text evidence="1">This protein binds specifically to 23S rRNA; its binding is stimulated by other ribosomal proteins, e.g. L4, L17, and L20. It is important during the early stages of 50S assembly. It makes multiple contacts with different domains of the 23S rRNA in the assembled 50S subunit and ribosome (By similarity).</text>
</comment>
<comment type="function">
    <text evidence="1">The globular domain of the protein is located near the polypeptide exit tunnel on the outside of the subunit, while an extended beta-hairpin is found that lines the wall of the exit tunnel in the center of the 70S ribosome.</text>
</comment>
<comment type="subunit">
    <text evidence="1">Part of the 50S ribosomal subunit.</text>
</comment>
<comment type="similarity">
    <text evidence="1">Belongs to the universal ribosomal protein uL22 family.</text>
</comment>
<name>RL22_NITSB</name>
<protein>
    <recommendedName>
        <fullName evidence="1">Large ribosomal subunit protein uL22</fullName>
    </recommendedName>
    <alternativeName>
        <fullName evidence="2">50S ribosomal protein L22</fullName>
    </alternativeName>
</protein>
<reference key="1">
    <citation type="journal article" date="2007" name="Proc. Natl. Acad. Sci. U.S.A.">
        <title>Deep-sea vent epsilon-proteobacterial genomes provide insights into emergence of pathogens.</title>
        <authorList>
            <person name="Nakagawa S."/>
            <person name="Takaki Y."/>
            <person name="Shimamura S."/>
            <person name="Reysenbach A.-L."/>
            <person name="Takai K."/>
            <person name="Horikoshi K."/>
        </authorList>
    </citation>
    <scope>NUCLEOTIDE SEQUENCE [LARGE SCALE GENOMIC DNA]</scope>
    <source>
        <strain>SB155-2</strain>
    </source>
</reference>
<feature type="chain" id="PRO_1000052617" description="Large ribosomal subunit protein uL22">
    <location>
        <begin position="1"/>
        <end position="108"/>
    </location>
</feature>
<accession>A6Q1I3</accession>
<proteinExistence type="inferred from homology"/>
<gene>
    <name evidence="1" type="primary">rplV</name>
    <name type="ordered locus">NIS_0228</name>
</gene>
<organism>
    <name type="scientific">Nitratiruptor sp. (strain SB155-2)</name>
    <dbReference type="NCBI Taxonomy" id="387092"/>
    <lineage>
        <taxon>Bacteria</taxon>
        <taxon>Pseudomonadati</taxon>
        <taxon>Campylobacterota</taxon>
        <taxon>Epsilonproteobacteria</taxon>
        <taxon>Nautiliales</taxon>
        <taxon>Nitratiruptoraceae</taxon>
        <taxon>Nitratiruptor</taxon>
    </lineage>
</organism>
<sequence length="108" mass="12016">MSKAVLRFIRLSPTKARLIAREVQGMNAEEALAALEFMPNKAAKVISKVITSAVANGGYEPEEVVITSCRVDRGPYLKRFRPRARGRASRIMKPTSHVYVEVAQKKDS</sequence>
<dbReference type="EMBL" id="AP009178">
    <property type="protein sequence ID" value="BAF69342.1"/>
    <property type="molecule type" value="Genomic_DNA"/>
</dbReference>
<dbReference type="RefSeq" id="WP_012081605.1">
    <property type="nucleotide sequence ID" value="NC_009662.1"/>
</dbReference>
<dbReference type="SMR" id="A6Q1I3"/>
<dbReference type="FunCoup" id="A6Q1I3">
    <property type="interactions" value="483"/>
</dbReference>
<dbReference type="STRING" id="387092.NIS_0228"/>
<dbReference type="KEGG" id="nis:NIS_0228"/>
<dbReference type="eggNOG" id="COG0091">
    <property type="taxonomic scope" value="Bacteria"/>
</dbReference>
<dbReference type="HOGENOM" id="CLU_083987_3_3_7"/>
<dbReference type="InParanoid" id="A6Q1I3"/>
<dbReference type="OrthoDB" id="9805969at2"/>
<dbReference type="Proteomes" id="UP000001118">
    <property type="component" value="Chromosome"/>
</dbReference>
<dbReference type="GO" id="GO:0022625">
    <property type="term" value="C:cytosolic large ribosomal subunit"/>
    <property type="evidence" value="ECO:0007669"/>
    <property type="project" value="TreeGrafter"/>
</dbReference>
<dbReference type="GO" id="GO:0019843">
    <property type="term" value="F:rRNA binding"/>
    <property type="evidence" value="ECO:0007669"/>
    <property type="project" value="UniProtKB-UniRule"/>
</dbReference>
<dbReference type="GO" id="GO:0003735">
    <property type="term" value="F:structural constituent of ribosome"/>
    <property type="evidence" value="ECO:0007669"/>
    <property type="project" value="InterPro"/>
</dbReference>
<dbReference type="GO" id="GO:0006412">
    <property type="term" value="P:translation"/>
    <property type="evidence" value="ECO:0007669"/>
    <property type="project" value="UniProtKB-UniRule"/>
</dbReference>
<dbReference type="CDD" id="cd00336">
    <property type="entry name" value="Ribosomal_L22"/>
    <property type="match status" value="1"/>
</dbReference>
<dbReference type="Gene3D" id="3.90.470.10">
    <property type="entry name" value="Ribosomal protein L22/L17"/>
    <property type="match status" value="1"/>
</dbReference>
<dbReference type="HAMAP" id="MF_01331_B">
    <property type="entry name" value="Ribosomal_uL22_B"/>
    <property type="match status" value="1"/>
</dbReference>
<dbReference type="InterPro" id="IPR001063">
    <property type="entry name" value="Ribosomal_uL22"/>
</dbReference>
<dbReference type="InterPro" id="IPR005727">
    <property type="entry name" value="Ribosomal_uL22_bac/chlpt-type"/>
</dbReference>
<dbReference type="InterPro" id="IPR047867">
    <property type="entry name" value="Ribosomal_uL22_bac/org-type"/>
</dbReference>
<dbReference type="InterPro" id="IPR018260">
    <property type="entry name" value="Ribosomal_uL22_CS"/>
</dbReference>
<dbReference type="InterPro" id="IPR036394">
    <property type="entry name" value="Ribosomal_uL22_sf"/>
</dbReference>
<dbReference type="NCBIfam" id="TIGR01044">
    <property type="entry name" value="rplV_bact"/>
    <property type="match status" value="1"/>
</dbReference>
<dbReference type="PANTHER" id="PTHR13501">
    <property type="entry name" value="CHLOROPLAST 50S RIBOSOMAL PROTEIN L22-RELATED"/>
    <property type="match status" value="1"/>
</dbReference>
<dbReference type="PANTHER" id="PTHR13501:SF8">
    <property type="entry name" value="LARGE RIBOSOMAL SUBUNIT PROTEIN UL22M"/>
    <property type="match status" value="1"/>
</dbReference>
<dbReference type="Pfam" id="PF00237">
    <property type="entry name" value="Ribosomal_L22"/>
    <property type="match status" value="1"/>
</dbReference>
<dbReference type="SUPFAM" id="SSF54843">
    <property type="entry name" value="Ribosomal protein L22"/>
    <property type="match status" value="1"/>
</dbReference>
<dbReference type="PROSITE" id="PS00464">
    <property type="entry name" value="RIBOSOMAL_L22"/>
    <property type="match status" value="1"/>
</dbReference>
<keyword id="KW-1185">Reference proteome</keyword>
<keyword id="KW-0687">Ribonucleoprotein</keyword>
<keyword id="KW-0689">Ribosomal protein</keyword>
<keyword id="KW-0694">RNA-binding</keyword>
<keyword id="KW-0699">rRNA-binding</keyword>
<evidence type="ECO:0000255" key="1">
    <source>
        <dbReference type="HAMAP-Rule" id="MF_01331"/>
    </source>
</evidence>
<evidence type="ECO:0000305" key="2"/>